<name>TRFM_RABIT</name>
<gene>
    <name evidence="2" type="primary">MELTF</name>
    <name type="synonym">MFI2</name>
</gene>
<sequence length="736" mass="80170">MRCRSAAMWIFLALRTALGSVEVRWCTASEPEQQKCEDMSQAFREAGLQPALLCVQGTSADHCVQLIAAHEADAITLDGGAIYEAGKEHGLKPVVGEVYDQEVGTSYYAVAVVKRSSNVTINTLRGVKSCHTGINRTVGWNVPVGYLVDSGRLSVMGCDVLKAVSEYFGGSCVPGAGETRYSESLCRLCRGDTSGEGVCDKSPLERYYDYSGAFRCLAEGAGDVAFVKHSTVLENTDGRTLPSWGHMLMSRDFELLCRDGSRASVTEWQHCHLARVPAHAVVVRADTDAGLIFRLLNEGQRLFSHEGSSFQMFSSEAYGQKNLLFKDSTLELVPIATQTYEAWLGPEYLHAMKGLLCDPNRLPPYLRWCVLSTPEIQKCGDMAVAFSRQRLKPEIQCVSAESPQHCMEQIQAGHIDAVTLNGEDIHTAGKTYGLIPAAGELYAADDRSNSYFVVAVVKRDSAYAFTVDELRGKRSCHPGFGSPAGWDVPVGALIHWGYIRPRNCDVLTAVGQFFNASCVPVNNPKKYPSSLCALCVGDEQGRNKCTGNSQERYYGDSGAFRCLVEGAGDVAFVKHTTIFDNTNGHNPEPWAAHLRSQDYELLCPNGARAEAHQFAACNLAQIPSHAVMVRPDTNIFTVYGLLDKAQDLFGDDHNKNGFKMFDSSSYHGRDLLFKDATVRAVPVGERTTYQDWLGPDYVAALEGMQSQRCSGAAVGAPGASLLPLLPLAVGLLLSSL</sequence>
<accession>O97490</accession>
<organism>
    <name type="scientific">Oryctolagus cuniculus</name>
    <name type="common">Rabbit</name>
    <dbReference type="NCBI Taxonomy" id="9986"/>
    <lineage>
        <taxon>Eukaryota</taxon>
        <taxon>Metazoa</taxon>
        <taxon>Chordata</taxon>
        <taxon>Craniata</taxon>
        <taxon>Vertebrata</taxon>
        <taxon>Euteleostomi</taxon>
        <taxon>Mammalia</taxon>
        <taxon>Eutheria</taxon>
        <taxon>Euarchontoglires</taxon>
        <taxon>Glires</taxon>
        <taxon>Lagomorpha</taxon>
        <taxon>Leporidae</taxon>
        <taxon>Oryctolagus</taxon>
    </lineage>
</organism>
<dbReference type="EMBL" id="AB010995">
    <property type="protein sequence ID" value="BAA33956.1"/>
    <property type="molecule type" value="mRNA"/>
</dbReference>
<dbReference type="RefSeq" id="NP_001075461.1">
    <property type="nucleotide sequence ID" value="NM_001081992.1"/>
</dbReference>
<dbReference type="SMR" id="O97490"/>
<dbReference type="FunCoup" id="O97490">
    <property type="interactions" value="101"/>
</dbReference>
<dbReference type="STRING" id="9986.ENSOCUP00000011582"/>
<dbReference type="MEROPS" id="S60.976"/>
<dbReference type="GlyCosmos" id="O97490">
    <property type="glycosylation" value="3 sites, No reported glycans"/>
</dbReference>
<dbReference type="PaxDb" id="9986-ENSOCUP00000011582"/>
<dbReference type="GeneID" id="100008603"/>
<dbReference type="KEGG" id="ocu:100008603"/>
<dbReference type="CTD" id="4241"/>
<dbReference type="eggNOG" id="ENOG502QSZB">
    <property type="taxonomic scope" value="Eukaryota"/>
</dbReference>
<dbReference type="InParanoid" id="O97490"/>
<dbReference type="OrthoDB" id="9981115at2759"/>
<dbReference type="Proteomes" id="UP000001811">
    <property type="component" value="Unplaced"/>
</dbReference>
<dbReference type="GO" id="GO:0005769">
    <property type="term" value="C:early endosome"/>
    <property type="evidence" value="ECO:0007669"/>
    <property type="project" value="TreeGrafter"/>
</dbReference>
<dbReference type="GO" id="GO:0005615">
    <property type="term" value="C:extracellular space"/>
    <property type="evidence" value="ECO:0007669"/>
    <property type="project" value="InterPro"/>
</dbReference>
<dbReference type="GO" id="GO:0005886">
    <property type="term" value="C:plasma membrane"/>
    <property type="evidence" value="ECO:0007669"/>
    <property type="project" value="UniProtKB-SubCell"/>
</dbReference>
<dbReference type="GO" id="GO:0055037">
    <property type="term" value="C:recycling endosome"/>
    <property type="evidence" value="ECO:0007669"/>
    <property type="project" value="TreeGrafter"/>
</dbReference>
<dbReference type="GO" id="GO:0098552">
    <property type="term" value="C:side of membrane"/>
    <property type="evidence" value="ECO:0007669"/>
    <property type="project" value="UniProtKB-KW"/>
</dbReference>
<dbReference type="GO" id="GO:0046872">
    <property type="term" value="F:metal ion binding"/>
    <property type="evidence" value="ECO:0007669"/>
    <property type="project" value="UniProtKB-KW"/>
</dbReference>
<dbReference type="GO" id="GO:0006826">
    <property type="term" value="P:iron ion transport"/>
    <property type="evidence" value="ECO:0007669"/>
    <property type="project" value="UniProtKB-KW"/>
</dbReference>
<dbReference type="CDD" id="cd13529">
    <property type="entry name" value="PBP2_transferrin"/>
    <property type="match status" value="2"/>
</dbReference>
<dbReference type="FunFam" id="3.40.190.10:FF:000108">
    <property type="entry name" value="melanotransferrin"/>
    <property type="match status" value="2"/>
</dbReference>
<dbReference type="Gene3D" id="3.40.190.10">
    <property type="entry name" value="Periplasmic binding protein-like II"/>
    <property type="match status" value="4"/>
</dbReference>
<dbReference type="InterPro" id="IPR016357">
    <property type="entry name" value="Transferrin"/>
</dbReference>
<dbReference type="InterPro" id="IPR001156">
    <property type="entry name" value="Transferrin-like_dom"/>
</dbReference>
<dbReference type="InterPro" id="IPR018195">
    <property type="entry name" value="Transferrin_Fe_BS"/>
</dbReference>
<dbReference type="PANTHER" id="PTHR11485:SF21">
    <property type="entry name" value="MELANOTRANSFERRIN"/>
    <property type="match status" value="1"/>
</dbReference>
<dbReference type="PANTHER" id="PTHR11485">
    <property type="entry name" value="TRANSFERRIN"/>
    <property type="match status" value="1"/>
</dbReference>
<dbReference type="Pfam" id="PF00405">
    <property type="entry name" value="Transferrin"/>
    <property type="match status" value="2"/>
</dbReference>
<dbReference type="PIRSF" id="PIRSF002549">
    <property type="entry name" value="Transferrin"/>
    <property type="match status" value="1"/>
</dbReference>
<dbReference type="PRINTS" id="PR00422">
    <property type="entry name" value="TRANSFERRIN"/>
</dbReference>
<dbReference type="SMART" id="SM00094">
    <property type="entry name" value="TR_FER"/>
    <property type="match status" value="2"/>
</dbReference>
<dbReference type="SUPFAM" id="SSF53850">
    <property type="entry name" value="Periplasmic binding protein-like II"/>
    <property type="match status" value="2"/>
</dbReference>
<dbReference type="PROSITE" id="PS00205">
    <property type="entry name" value="TRANSFERRIN_LIKE_1"/>
    <property type="match status" value="2"/>
</dbReference>
<dbReference type="PROSITE" id="PS00206">
    <property type="entry name" value="TRANSFERRIN_LIKE_2"/>
    <property type="match status" value="1"/>
</dbReference>
<dbReference type="PROSITE" id="PS00207">
    <property type="entry name" value="TRANSFERRIN_LIKE_3"/>
    <property type="match status" value="1"/>
</dbReference>
<dbReference type="PROSITE" id="PS51408">
    <property type="entry name" value="TRANSFERRIN_LIKE_4"/>
    <property type="match status" value="2"/>
</dbReference>
<protein>
    <recommendedName>
        <fullName evidence="2">Melanotransferrin</fullName>
    </recommendedName>
    <alternativeName>
        <fullName>Membrane-bound transferrin-like protein p97</fullName>
    </alternativeName>
    <cdAntigenName>CD228</cdAntigenName>
</protein>
<reference key="1">
    <citation type="journal article" date="1998" name="Eur. J. Biochem.">
        <title>Expression of membrane-bound transferrin-like protein p97 on the cell surface of chondrocyte.</title>
        <authorList>
            <person name="Kawamoto T."/>
            <person name="Pan H."/>
            <person name="Yan W."/>
            <person name="Ishida H."/>
            <person name="Usui E."/>
            <person name="Oda R."/>
            <person name="Nakamasu K."/>
            <person name="Noshiro M."/>
            <person name="Kawashima-Ohya Y."/>
            <person name="Fujii M."/>
            <person name="Shintani H."/>
            <person name="Okada Y."/>
            <person name="Kato Y."/>
        </authorList>
    </citation>
    <scope>NUCLEOTIDE SEQUENCE [MRNA]</scope>
</reference>
<comment type="function">
    <text evidence="1">Involved in iron cellular uptake. Seems to be internalized and then recycled back to the cell membrane. Binds a single atom of iron per subunit. Could also bind zinc (By similarity).</text>
</comment>
<comment type="subcellular location">
    <subcellularLocation>
        <location evidence="1">Cell membrane</location>
        <topology evidence="1">Lipid-anchor</topology>
        <topology evidence="1">GPI-anchor</topology>
    </subcellularLocation>
</comment>
<comment type="similarity">
    <text evidence="4">Belongs to the transferrin family.</text>
</comment>
<proteinExistence type="evidence at transcript level"/>
<keyword id="KW-1003">Cell membrane</keyword>
<keyword id="KW-1015">Disulfide bond</keyword>
<keyword id="KW-0325">Glycoprotein</keyword>
<keyword id="KW-0336">GPI-anchor</keyword>
<keyword id="KW-0406">Ion transport</keyword>
<keyword id="KW-0408">Iron</keyword>
<keyword id="KW-0410">Iron transport</keyword>
<keyword id="KW-0449">Lipoprotein</keyword>
<keyword id="KW-0472">Membrane</keyword>
<keyword id="KW-0479">Metal-binding</keyword>
<keyword id="KW-1185">Reference proteome</keyword>
<keyword id="KW-0677">Repeat</keyword>
<keyword id="KW-0732">Signal</keyword>
<keyword id="KW-0813">Transport</keyword>
<keyword id="KW-0862">Zinc</keyword>
<feature type="signal peptide" evidence="3">
    <location>
        <begin position="1"/>
        <end position="19"/>
    </location>
</feature>
<feature type="chain" id="PRO_0000035743" description="Melanotransferrin">
    <location>
        <begin position="20"/>
        <end position="711"/>
    </location>
</feature>
<feature type="propeptide" id="PRO_0000035744" description="Removed in mature form" evidence="3">
    <location>
        <begin position="712"/>
        <end position="736"/>
    </location>
</feature>
<feature type="domain" description="Transferrin-like 1" evidence="4">
    <location>
        <begin position="23"/>
        <end position="357"/>
    </location>
</feature>
<feature type="domain" description="Transferrin-like 2" evidence="4">
    <location>
        <begin position="366"/>
        <end position="706"/>
    </location>
</feature>
<feature type="binding site" evidence="4">
    <location>
        <position position="78"/>
    </location>
    <ligand>
        <name>Fe(3+)</name>
        <dbReference type="ChEBI" id="CHEBI:29034"/>
        <label>1</label>
    </ligand>
</feature>
<feature type="binding site" evidence="4">
    <location>
        <position position="107"/>
    </location>
    <ligand>
        <name>Fe(3+)</name>
        <dbReference type="ChEBI" id="CHEBI:29034"/>
        <label>1</label>
    </ligand>
</feature>
<feature type="binding site" evidence="4">
    <location>
        <position position="132"/>
    </location>
    <ligand>
        <name>hydrogencarbonate</name>
        <dbReference type="ChEBI" id="CHEBI:17544"/>
        <label>1</label>
    </ligand>
</feature>
<feature type="binding site" evidence="4">
    <location>
        <position position="136"/>
    </location>
    <ligand>
        <name>hydrogencarbonate</name>
        <dbReference type="ChEBI" id="CHEBI:17544"/>
        <label>1</label>
    </ligand>
</feature>
<feature type="binding site" evidence="4">
    <location>
        <position position="138"/>
    </location>
    <ligand>
        <name>hydrogencarbonate</name>
        <dbReference type="ChEBI" id="CHEBI:17544"/>
        <label>1</label>
    </ligand>
</feature>
<feature type="binding site" evidence="4">
    <location>
        <position position="139"/>
    </location>
    <ligand>
        <name>hydrogencarbonate</name>
        <dbReference type="ChEBI" id="CHEBI:17544"/>
        <label>1</label>
    </ligand>
</feature>
<feature type="binding site" evidence="4">
    <location>
        <position position="210"/>
    </location>
    <ligand>
        <name>Fe(3+)</name>
        <dbReference type="ChEBI" id="CHEBI:29034"/>
        <label>1</label>
    </ligand>
</feature>
<feature type="binding site" evidence="4">
    <location>
        <position position="279"/>
    </location>
    <ligand>
        <name>Fe(3+)</name>
        <dbReference type="ChEBI" id="CHEBI:29034"/>
        <label>1</label>
    </ligand>
</feature>
<feature type="binding site" evidence="4">
    <location>
        <position position="451"/>
    </location>
    <ligand>
        <name>Fe(3+)</name>
        <dbReference type="ChEBI" id="CHEBI:29034"/>
        <label>2</label>
    </ligand>
</feature>
<feature type="binding site" evidence="4">
    <location>
        <position position="625"/>
    </location>
    <ligand>
        <name>Fe(3+)</name>
        <dbReference type="ChEBI" id="CHEBI:29034"/>
        <label>2</label>
    </ligand>
</feature>
<feature type="lipid moiety-binding region" description="GPI-anchor amidated glycine" evidence="3">
    <location>
        <position position="711"/>
    </location>
</feature>
<feature type="glycosylation site" description="N-linked (GlcNAc...) asparagine" evidence="3">
    <location>
        <position position="118"/>
    </location>
</feature>
<feature type="glycosylation site" description="N-linked (GlcNAc...) asparagine" evidence="3">
    <location>
        <position position="135"/>
    </location>
</feature>
<feature type="glycosylation site" description="N-linked (GlcNAc...) asparagine" evidence="3">
    <location>
        <position position="515"/>
    </location>
</feature>
<feature type="disulfide bond" evidence="4">
    <location>
        <begin position="26"/>
        <end position="63"/>
    </location>
</feature>
<feature type="disulfide bond" evidence="4">
    <location>
        <begin position="36"/>
        <end position="54"/>
    </location>
</feature>
<feature type="disulfide bond" evidence="4">
    <location>
        <begin position="130"/>
        <end position="216"/>
    </location>
</feature>
<feature type="disulfide bond" evidence="4">
    <location>
        <begin position="172"/>
        <end position="189"/>
    </location>
</feature>
<feature type="disulfide bond" evidence="4">
    <location>
        <begin position="186"/>
        <end position="199"/>
    </location>
</feature>
<feature type="disulfide bond" evidence="4">
    <location>
        <begin position="257"/>
        <end position="271"/>
    </location>
</feature>
<evidence type="ECO:0000250" key="1"/>
<evidence type="ECO:0000250" key="2">
    <source>
        <dbReference type="UniProtKB" id="P08582"/>
    </source>
</evidence>
<evidence type="ECO:0000255" key="3"/>
<evidence type="ECO:0000255" key="4">
    <source>
        <dbReference type="PROSITE-ProRule" id="PRU00741"/>
    </source>
</evidence>